<name>Y361_STAAW</name>
<feature type="chain" id="PRO_0000215534" description="Uncharacterized protein MW0361">
    <location>
        <begin position="1"/>
        <end position="318"/>
    </location>
</feature>
<feature type="region of interest" description="Disordered" evidence="2">
    <location>
        <begin position="172"/>
        <end position="318"/>
    </location>
</feature>
<feature type="coiled-coil region" evidence="1">
    <location>
        <begin position="67"/>
        <end position="157"/>
    </location>
</feature>
<feature type="compositionally biased region" description="Basic and acidic residues" evidence="2">
    <location>
        <begin position="175"/>
        <end position="193"/>
    </location>
</feature>
<feature type="compositionally biased region" description="Basic and acidic residues" evidence="2">
    <location>
        <begin position="219"/>
        <end position="236"/>
    </location>
</feature>
<feature type="compositionally biased region" description="Polar residues" evidence="2">
    <location>
        <begin position="237"/>
        <end position="248"/>
    </location>
</feature>
<feature type="compositionally biased region" description="Basic and acidic residues" evidence="2">
    <location>
        <begin position="249"/>
        <end position="274"/>
    </location>
</feature>
<feature type="compositionally biased region" description="Basic and acidic residues" evidence="2">
    <location>
        <begin position="300"/>
        <end position="310"/>
    </location>
</feature>
<sequence length="318" mass="35612">MLTKEFAQRVELSEKQVRKIVQHLEERGYQLSKTEYRGREATDFKEEDIELFKDIADKVKQTNSYDLAFDELEKEKDFLQVIVKNDDKNLPTNQNVAQLVEDLRLEIQKMREERHLLGQMMNQVHQQQQELKELQNQLTSKIDSNSESLKAIQTSQEAIQEAQASQAKVLAESTNKVEKNAVTEDKADSKDSKVAGVNTSTDAKTDTKADNAGDGTTTKVDKEDQISATEAIEKASVEQSKNGNAAETSNKEATIDAEAQHDAEQQVAEAHAEASKQATSNDSLEAKAENDSTASQSEMSEPKPQEEKKGFFARLFNL</sequence>
<gene>
    <name type="ordered locus">MW0361</name>
</gene>
<proteinExistence type="predicted"/>
<evidence type="ECO:0000255" key="1"/>
<evidence type="ECO:0000256" key="2">
    <source>
        <dbReference type="SAM" id="MobiDB-lite"/>
    </source>
</evidence>
<accession>Q8NY74</accession>
<protein>
    <recommendedName>
        <fullName>Uncharacterized protein MW0361</fullName>
    </recommendedName>
</protein>
<keyword id="KW-0175">Coiled coil</keyword>
<organism>
    <name type="scientific">Staphylococcus aureus (strain MW2)</name>
    <dbReference type="NCBI Taxonomy" id="196620"/>
    <lineage>
        <taxon>Bacteria</taxon>
        <taxon>Bacillati</taxon>
        <taxon>Bacillota</taxon>
        <taxon>Bacilli</taxon>
        <taxon>Bacillales</taxon>
        <taxon>Staphylococcaceae</taxon>
        <taxon>Staphylococcus</taxon>
    </lineage>
</organism>
<reference key="1">
    <citation type="journal article" date="2002" name="Lancet">
        <title>Genome and virulence determinants of high virulence community-acquired MRSA.</title>
        <authorList>
            <person name="Baba T."/>
            <person name="Takeuchi F."/>
            <person name="Kuroda M."/>
            <person name="Yuzawa H."/>
            <person name="Aoki K."/>
            <person name="Oguchi A."/>
            <person name="Nagai Y."/>
            <person name="Iwama N."/>
            <person name="Asano K."/>
            <person name="Naimi T."/>
            <person name="Kuroda H."/>
            <person name="Cui L."/>
            <person name="Yamamoto K."/>
            <person name="Hiramatsu K."/>
        </authorList>
    </citation>
    <scope>NUCLEOTIDE SEQUENCE [LARGE SCALE GENOMIC DNA]</scope>
    <source>
        <strain>MW2</strain>
    </source>
</reference>
<dbReference type="EMBL" id="BA000033">
    <property type="protein sequence ID" value="BAB94226.1"/>
    <property type="molecule type" value="Genomic_DNA"/>
</dbReference>
<dbReference type="RefSeq" id="WP_000956135.1">
    <property type="nucleotide sequence ID" value="NC_003923.1"/>
</dbReference>
<dbReference type="SMR" id="Q8NY74"/>
<dbReference type="KEGG" id="sam:MW0361"/>
<dbReference type="HOGENOM" id="CLU_885403_0_0_9"/>